<feature type="initiator methionine" description="Removed" evidence="1">
    <location>
        <position position="1"/>
    </location>
</feature>
<feature type="chain" id="PRO_0000172426" description="Large ribosomal subunit protein bL32">
    <location>
        <begin position="2"/>
        <end position="60"/>
    </location>
</feature>
<feature type="region of interest" description="Disordered" evidence="2">
    <location>
        <begin position="1"/>
        <end position="28"/>
    </location>
</feature>
<feature type="compositionally biased region" description="Basic residues" evidence="2">
    <location>
        <begin position="1"/>
        <end position="23"/>
    </location>
</feature>
<feature type="helix" evidence="4">
    <location>
        <begin position="13"/>
        <end position="19"/>
    </location>
</feature>
<feature type="helix" evidence="4">
    <location>
        <begin position="20"/>
        <end position="22"/>
    </location>
</feature>
<feature type="strand" evidence="4">
    <location>
        <begin position="34"/>
        <end position="40"/>
    </location>
</feature>
<feature type="turn" evidence="4">
    <location>
        <begin position="47"/>
        <end position="49"/>
    </location>
</feature>
<feature type="strand" evidence="5">
    <location>
        <begin position="51"/>
        <end position="53"/>
    </location>
</feature>
<accession>P62652</accession>
<reference key="1">
    <citation type="journal article" date="1996" name="J. Ferment. Bioeng.">
        <title>Fusion with ribosomal protein L32 increased the in vivo thermostability of kanamycin nucleotidyltransferase in Thermus thermophilus.</title>
        <authorList>
            <person name="Maseda H."/>
            <person name="Hoshino T."/>
        </authorList>
    </citation>
    <scope>NUCLEOTIDE SEQUENCE [GENOMIC DNA]</scope>
</reference>
<reference key="2">
    <citation type="journal article" date="2004" name="Nat. Biotechnol.">
        <title>The genome sequence of the extreme thermophile Thermus thermophilus.</title>
        <authorList>
            <person name="Henne A."/>
            <person name="Brueggemann H."/>
            <person name="Raasch C."/>
            <person name="Wiezer A."/>
            <person name="Hartsch T."/>
            <person name="Liesegang H."/>
            <person name="Johann A."/>
            <person name="Lienard T."/>
            <person name="Gohl O."/>
            <person name="Martinez-Arias R."/>
            <person name="Jacobi C."/>
            <person name="Starkuviene V."/>
            <person name="Schlenczeck S."/>
            <person name="Dencker S."/>
            <person name="Huber R."/>
            <person name="Klenk H.-P."/>
            <person name="Kramer W."/>
            <person name="Merkl R."/>
            <person name="Gottschalk G."/>
            <person name="Fritz H.-J."/>
        </authorList>
    </citation>
    <scope>NUCLEOTIDE SEQUENCE [LARGE SCALE GENOMIC DNA]</scope>
    <source>
        <strain>ATCC BAA-163 / DSM 7039 / HB27</strain>
    </source>
</reference>
<proteinExistence type="evidence at protein level"/>
<keyword id="KW-0002">3D-structure</keyword>
<keyword id="KW-0687">Ribonucleoprotein</keyword>
<keyword id="KW-0689">Ribosomal protein</keyword>
<protein>
    <recommendedName>
        <fullName evidence="3">Large ribosomal subunit protein bL32</fullName>
    </recommendedName>
    <alternativeName>
        <fullName>50S ribosomal protein L32</fullName>
    </alternativeName>
</protein>
<organism>
    <name type="scientific">Thermus thermophilus (strain ATCC BAA-163 / DSM 7039 / HB27)</name>
    <dbReference type="NCBI Taxonomy" id="262724"/>
    <lineage>
        <taxon>Bacteria</taxon>
        <taxon>Thermotogati</taxon>
        <taxon>Deinococcota</taxon>
        <taxon>Deinococci</taxon>
        <taxon>Thermales</taxon>
        <taxon>Thermaceae</taxon>
        <taxon>Thermus</taxon>
    </lineage>
</organism>
<sequence>MAKHPVPKKKTSKARRDARRSHHALTPPILVPCPECKAMKPPHTVCPECGYYAGRKVLEV</sequence>
<name>RL32_THET2</name>
<evidence type="ECO:0000250" key="1"/>
<evidence type="ECO:0000256" key="2">
    <source>
        <dbReference type="SAM" id="MobiDB-lite"/>
    </source>
</evidence>
<evidence type="ECO:0000305" key="3"/>
<evidence type="ECO:0007829" key="4">
    <source>
        <dbReference type="PDB" id="4V67"/>
    </source>
</evidence>
<evidence type="ECO:0007829" key="5">
    <source>
        <dbReference type="PDB" id="4V9K"/>
    </source>
</evidence>
<comment type="function">
    <text evidence="1">Found on the solvent side of the large subunit.</text>
</comment>
<comment type="subunit">
    <text>Part of the 50S ribosomal subunit.</text>
</comment>
<comment type="similarity">
    <text evidence="3">Belongs to the bacterial ribosomal protein bL32 family.</text>
</comment>
<gene>
    <name type="primary">rpmF</name>
    <name type="synonym">rpl32</name>
    <name type="ordered locus">TT_C0050</name>
</gene>
<dbReference type="EMBL" id="AB002823">
    <property type="protein sequence ID" value="BAA19663.1"/>
    <property type="molecule type" value="Genomic_DNA"/>
</dbReference>
<dbReference type="EMBL" id="AE017221">
    <property type="protein sequence ID" value="AAS80398.1"/>
    <property type="molecule type" value="Genomic_DNA"/>
</dbReference>
<dbReference type="PIR" id="T11853">
    <property type="entry name" value="T11853"/>
</dbReference>
<dbReference type="RefSeq" id="WP_011172507.1">
    <property type="nucleotide sequence ID" value="NC_005835.1"/>
</dbReference>
<dbReference type="PDB" id="4V4I">
    <property type="method" value="X-ray"/>
    <property type="resolution" value="3.71 A"/>
    <property type="chains" value="Y=1-60"/>
</dbReference>
<dbReference type="PDB" id="4V4J">
    <property type="method" value="X-ray"/>
    <property type="resolution" value="3.83 A"/>
    <property type="chains" value="Y=1-60"/>
</dbReference>
<dbReference type="PDB" id="4V63">
    <property type="method" value="X-ray"/>
    <property type="resolution" value="3.21 A"/>
    <property type="chains" value="B5/D5=1-60"/>
</dbReference>
<dbReference type="PDB" id="4V67">
    <property type="method" value="X-ray"/>
    <property type="resolution" value="3.00 A"/>
    <property type="chains" value="B5/D5=1-60"/>
</dbReference>
<dbReference type="PDB" id="4V7P">
    <property type="method" value="X-ray"/>
    <property type="resolution" value="3.62 A"/>
    <property type="chains" value="B2/C2=2-60"/>
</dbReference>
<dbReference type="PDB" id="4V83">
    <property type="method" value="X-ray"/>
    <property type="resolution" value="3.50 A"/>
    <property type="chains" value="B2/D2=2-53"/>
</dbReference>
<dbReference type="PDB" id="4V84">
    <property type="method" value="X-ray"/>
    <property type="resolution" value="3.40 A"/>
    <property type="chains" value="B2/D2=2-53"/>
</dbReference>
<dbReference type="PDB" id="4V9J">
    <property type="method" value="X-ray"/>
    <property type="resolution" value="3.86 A"/>
    <property type="chains" value="B5/D5=2-60"/>
</dbReference>
<dbReference type="PDB" id="4V9K">
    <property type="method" value="X-ray"/>
    <property type="resolution" value="3.50 A"/>
    <property type="chains" value="B5/D5=2-60"/>
</dbReference>
<dbReference type="PDB" id="4V9L">
    <property type="method" value="X-ray"/>
    <property type="resolution" value="3.50 A"/>
    <property type="chains" value="B5/D5=2-60"/>
</dbReference>
<dbReference type="PDB" id="4V9M">
    <property type="method" value="X-ray"/>
    <property type="resolution" value="4.00 A"/>
    <property type="chains" value="B5/D5=2-60"/>
</dbReference>
<dbReference type="PDB" id="4V9N">
    <property type="method" value="X-ray"/>
    <property type="resolution" value="3.40 A"/>
    <property type="chains" value="B5/D5=2-53"/>
</dbReference>
<dbReference type="PDB" id="4V9Q">
    <property type="method" value="X-ray"/>
    <property type="resolution" value="3.40 A"/>
    <property type="chains" value="A2/C2=2-53"/>
</dbReference>
<dbReference type="PDB" id="4W29">
    <property type="method" value="X-ray"/>
    <property type="resolution" value="3.80 A"/>
    <property type="chains" value="B5/D5=2-60"/>
</dbReference>
<dbReference type="PDB" id="4XEJ">
    <property type="method" value="X-ray"/>
    <property type="resolution" value="3.80 A"/>
    <property type="chains" value="AL32/BL32=2-53"/>
</dbReference>
<dbReference type="PDB" id="5J4D">
    <property type="method" value="X-ray"/>
    <property type="resolution" value="3.10 A"/>
    <property type="chains" value="CA/HC=1-60"/>
</dbReference>
<dbReference type="PDB" id="5V8I">
    <property type="method" value="X-ray"/>
    <property type="resolution" value="3.25 A"/>
    <property type="chains" value="15/25=1-60"/>
</dbReference>
<dbReference type="PDB" id="6B4V">
    <property type="method" value="X-ray"/>
    <property type="resolution" value="3.40 A"/>
    <property type="chains" value="CA/GC=1-60"/>
</dbReference>
<dbReference type="PDB" id="6BOH">
    <property type="method" value="X-ray"/>
    <property type="resolution" value="3.40 A"/>
    <property type="chains" value="CA/HC=1-60"/>
</dbReference>
<dbReference type="PDB" id="6BOK">
    <property type="method" value="X-ray"/>
    <property type="resolution" value="3.55 A"/>
    <property type="chains" value="CA/FC=1-60"/>
</dbReference>
<dbReference type="PDBsum" id="4V4I"/>
<dbReference type="PDBsum" id="4V4J"/>
<dbReference type="PDBsum" id="4V63"/>
<dbReference type="PDBsum" id="4V67"/>
<dbReference type="PDBsum" id="4V7P"/>
<dbReference type="PDBsum" id="4V83"/>
<dbReference type="PDBsum" id="4V84"/>
<dbReference type="PDBsum" id="4V9J"/>
<dbReference type="PDBsum" id="4V9K"/>
<dbReference type="PDBsum" id="4V9L"/>
<dbReference type="PDBsum" id="4V9M"/>
<dbReference type="PDBsum" id="4V9N"/>
<dbReference type="PDBsum" id="4V9Q"/>
<dbReference type="PDBsum" id="4W29"/>
<dbReference type="PDBsum" id="4XEJ"/>
<dbReference type="PDBsum" id="5J4D"/>
<dbReference type="PDBsum" id="5V8I"/>
<dbReference type="PDBsum" id="6B4V"/>
<dbReference type="PDBsum" id="6BOH"/>
<dbReference type="PDBsum" id="6BOK"/>
<dbReference type="SMR" id="P62652"/>
<dbReference type="IntAct" id="P62652">
    <property type="interactions" value="4"/>
</dbReference>
<dbReference type="KEGG" id="tth:TT_C0050"/>
<dbReference type="eggNOG" id="COG0333">
    <property type="taxonomic scope" value="Bacteria"/>
</dbReference>
<dbReference type="HOGENOM" id="CLU_129084_1_3_0"/>
<dbReference type="OrthoDB" id="9812874at2"/>
<dbReference type="Proteomes" id="UP000000592">
    <property type="component" value="Chromosome"/>
</dbReference>
<dbReference type="GO" id="GO:0015934">
    <property type="term" value="C:large ribosomal subunit"/>
    <property type="evidence" value="ECO:0007669"/>
    <property type="project" value="InterPro"/>
</dbReference>
<dbReference type="GO" id="GO:0003735">
    <property type="term" value="F:structural constituent of ribosome"/>
    <property type="evidence" value="ECO:0007669"/>
    <property type="project" value="InterPro"/>
</dbReference>
<dbReference type="GO" id="GO:0006412">
    <property type="term" value="P:translation"/>
    <property type="evidence" value="ECO:0007669"/>
    <property type="project" value="UniProtKB-UniRule"/>
</dbReference>
<dbReference type="Gene3D" id="1.20.5.640">
    <property type="entry name" value="Single helix bin"/>
    <property type="match status" value="1"/>
</dbReference>
<dbReference type="HAMAP" id="MF_00340">
    <property type="entry name" value="Ribosomal_bL32"/>
    <property type="match status" value="1"/>
</dbReference>
<dbReference type="InterPro" id="IPR002677">
    <property type="entry name" value="Ribosomal_bL32"/>
</dbReference>
<dbReference type="InterPro" id="IPR044957">
    <property type="entry name" value="Ribosomal_bL32_bact"/>
</dbReference>
<dbReference type="InterPro" id="IPR011332">
    <property type="entry name" value="Ribosomal_zn-bd"/>
</dbReference>
<dbReference type="NCBIfam" id="TIGR01031">
    <property type="entry name" value="rpmF_bact"/>
    <property type="match status" value="1"/>
</dbReference>
<dbReference type="PANTHER" id="PTHR35534">
    <property type="entry name" value="50S RIBOSOMAL PROTEIN L32"/>
    <property type="match status" value="1"/>
</dbReference>
<dbReference type="PANTHER" id="PTHR35534:SF1">
    <property type="entry name" value="LARGE RIBOSOMAL SUBUNIT PROTEIN BL32"/>
    <property type="match status" value="1"/>
</dbReference>
<dbReference type="Pfam" id="PF01783">
    <property type="entry name" value="Ribosomal_L32p"/>
    <property type="match status" value="1"/>
</dbReference>
<dbReference type="SUPFAM" id="SSF57829">
    <property type="entry name" value="Zn-binding ribosomal proteins"/>
    <property type="match status" value="1"/>
</dbReference>